<reference key="1">
    <citation type="journal article" date="2010" name="BMC Genomics">
        <title>A genomic perspective on the potential of Actinobacillus succinogenes for industrial succinate production.</title>
        <authorList>
            <person name="McKinlay J.B."/>
            <person name="Laivenieks M."/>
            <person name="Schindler B.D."/>
            <person name="McKinlay A.A."/>
            <person name="Siddaramappa S."/>
            <person name="Challacombe J.F."/>
            <person name="Lowry S.R."/>
            <person name="Clum A."/>
            <person name="Lapidus A.L."/>
            <person name="Burkhart K.B."/>
            <person name="Harkins V."/>
            <person name="Vieille C."/>
        </authorList>
    </citation>
    <scope>NUCLEOTIDE SEQUENCE [LARGE SCALE GENOMIC DNA]</scope>
    <source>
        <strain>ATCC 55618 / DSM 22257 / CCUG 43843 / 130Z</strain>
    </source>
</reference>
<comment type="function">
    <text evidence="1">Involved in chromosome condensation, segregation and cell cycle progression. May participate in facilitating chromosome segregation by condensation DNA from both sides of a centrally located replisome during cell division. Not required for mini-F plasmid partitioning. Probably acts via its interaction with MukB and MukE. Overexpression results in anucleate cells. It has a calcium binding activity.</text>
</comment>
<comment type="subunit">
    <text evidence="1">Interacts, and probably forms a ternary complex, with MukE and MukB via its C-terminal region. The complex formation is stimulated by calcium or magnesium. It is required for an interaction between MukE and MukB.</text>
</comment>
<comment type="subcellular location">
    <subcellularLocation>
        <location evidence="1">Cytoplasm</location>
        <location evidence="1">Nucleoid</location>
    </subcellularLocation>
    <text evidence="1">Restricted to the nucleoid region.</text>
</comment>
<comment type="similarity">
    <text evidence="1">Belongs to the MukF family.</text>
</comment>
<evidence type="ECO:0000255" key="1">
    <source>
        <dbReference type="HAMAP-Rule" id="MF_01803"/>
    </source>
</evidence>
<dbReference type="EMBL" id="CP000746">
    <property type="protein sequence ID" value="ABR74764.1"/>
    <property type="molecule type" value="Genomic_DNA"/>
</dbReference>
<dbReference type="RefSeq" id="WP_012073141.1">
    <property type="nucleotide sequence ID" value="NC_009655.1"/>
</dbReference>
<dbReference type="SMR" id="A6VP67"/>
<dbReference type="STRING" id="339671.Asuc_1405"/>
<dbReference type="KEGG" id="asu:Asuc_1405"/>
<dbReference type="eggNOG" id="COG3006">
    <property type="taxonomic scope" value="Bacteria"/>
</dbReference>
<dbReference type="HOGENOM" id="CLU_049853_0_0_6"/>
<dbReference type="OrthoDB" id="6450805at2"/>
<dbReference type="Proteomes" id="UP000001114">
    <property type="component" value="Chromosome"/>
</dbReference>
<dbReference type="GO" id="GO:0005737">
    <property type="term" value="C:cytoplasm"/>
    <property type="evidence" value="ECO:0007669"/>
    <property type="project" value="UniProtKB-UniRule"/>
</dbReference>
<dbReference type="GO" id="GO:0009295">
    <property type="term" value="C:nucleoid"/>
    <property type="evidence" value="ECO:0007669"/>
    <property type="project" value="UniProtKB-SubCell"/>
</dbReference>
<dbReference type="GO" id="GO:0005509">
    <property type="term" value="F:calcium ion binding"/>
    <property type="evidence" value="ECO:0007669"/>
    <property type="project" value="UniProtKB-UniRule"/>
</dbReference>
<dbReference type="GO" id="GO:0051301">
    <property type="term" value="P:cell division"/>
    <property type="evidence" value="ECO:0007669"/>
    <property type="project" value="UniProtKB-KW"/>
</dbReference>
<dbReference type="GO" id="GO:0030261">
    <property type="term" value="P:chromosome condensation"/>
    <property type="evidence" value="ECO:0007669"/>
    <property type="project" value="UniProtKB-KW"/>
</dbReference>
<dbReference type="GO" id="GO:0007059">
    <property type="term" value="P:chromosome segregation"/>
    <property type="evidence" value="ECO:0007669"/>
    <property type="project" value="UniProtKB-UniRule"/>
</dbReference>
<dbReference type="GO" id="GO:0006260">
    <property type="term" value="P:DNA replication"/>
    <property type="evidence" value="ECO:0007669"/>
    <property type="project" value="UniProtKB-UniRule"/>
</dbReference>
<dbReference type="CDD" id="cd16337">
    <property type="entry name" value="MukF_C"/>
    <property type="match status" value="1"/>
</dbReference>
<dbReference type="Gene3D" id="1.20.58.590">
    <property type="entry name" value="Chromosome partition protein MukF, middle domain"/>
    <property type="match status" value="1"/>
</dbReference>
<dbReference type="Gene3D" id="1.10.225.40">
    <property type="entry name" value="MukF, C-terminal domain"/>
    <property type="match status" value="1"/>
</dbReference>
<dbReference type="Gene3D" id="1.10.10.10">
    <property type="entry name" value="Winged helix-like DNA-binding domain superfamily/Winged helix DNA-binding domain"/>
    <property type="match status" value="1"/>
</dbReference>
<dbReference type="HAMAP" id="MF_01803">
    <property type="entry name" value="MukF"/>
    <property type="match status" value="1"/>
</dbReference>
<dbReference type="InterPro" id="IPR005582">
    <property type="entry name" value="Chromosome_partition_MukF"/>
</dbReference>
<dbReference type="InterPro" id="IPR033441">
    <property type="entry name" value="MukF_C"/>
</dbReference>
<dbReference type="InterPro" id="IPR038198">
    <property type="entry name" value="MukF_C_sf"/>
</dbReference>
<dbReference type="InterPro" id="IPR033440">
    <property type="entry name" value="MukF_M"/>
</dbReference>
<dbReference type="InterPro" id="IPR036141">
    <property type="entry name" value="MukF_M_sp"/>
</dbReference>
<dbReference type="InterPro" id="IPR033439">
    <property type="entry name" value="MukF_WHTH"/>
</dbReference>
<dbReference type="InterPro" id="IPR036388">
    <property type="entry name" value="WH-like_DNA-bd_sf"/>
</dbReference>
<dbReference type="InterPro" id="IPR036390">
    <property type="entry name" value="WH_DNA-bd_sf"/>
</dbReference>
<dbReference type="NCBIfam" id="NF003615">
    <property type="entry name" value="PRK05260.1"/>
    <property type="match status" value="1"/>
</dbReference>
<dbReference type="Pfam" id="PF03882">
    <property type="entry name" value="KicB"/>
    <property type="match status" value="1"/>
</dbReference>
<dbReference type="Pfam" id="PF17193">
    <property type="entry name" value="MukF_C"/>
    <property type="match status" value="1"/>
</dbReference>
<dbReference type="Pfam" id="PF17192">
    <property type="entry name" value="MukF_M"/>
    <property type="match status" value="1"/>
</dbReference>
<dbReference type="PIRSF" id="PIRSF018282">
    <property type="entry name" value="MukF"/>
    <property type="match status" value="1"/>
</dbReference>
<dbReference type="SUPFAM" id="SSF140570">
    <property type="entry name" value="MukF C-terminal domain-like"/>
    <property type="match status" value="1"/>
</dbReference>
<dbReference type="SUPFAM" id="SSF46785">
    <property type="entry name" value="Winged helix' DNA-binding domain"/>
    <property type="match status" value="1"/>
</dbReference>
<keyword id="KW-0106">Calcium</keyword>
<keyword id="KW-0131">Cell cycle</keyword>
<keyword id="KW-0132">Cell division</keyword>
<keyword id="KW-0159">Chromosome partition</keyword>
<keyword id="KW-0963">Cytoplasm</keyword>
<keyword id="KW-0226">DNA condensation</keyword>
<keyword id="KW-1185">Reference proteome</keyword>
<feature type="chain" id="PRO_1000073660" description="Chromosome partition protein MukF">
    <location>
        <begin position="1"/>
        <end position="444"/>
    </location>
</feature>
<feature type="region of interest" description="Leucine-zipper">
    <location>
        <begin position="211"/>
        <end position="239"/>
    </location>
</feature>
<gene>
    <name evidence="1" type="primary">mukF</name>
    <name type="ordered locus">Asuc_1405</name>
</gene>
<protein>
    <recommendedName>
        <fullName evidence="1">Chromosome partition protein MukF</fullName>
    </recommendedName>
</protein>
<organism>
    <name type="scientific">Actinobacillus succinogenes (strain ATCC 55618 / DSM 22257 / CCUG 43843 / 130Z)</name>
    <dbReference type="NCBI Taxonomy" id="339671"/>
    <lineage>
        <taxon>Bacteria</taxon>
        <taxon>Pseudomonadati</taxon>
        <taxon>Pseudomonadota</taxon>
        <taxon>Gammaproteobacteria</taxon>
        <taxon>Pasteurellales</taxon>
        <taxon>Pasteurellaceae</taxon>
        <taxon>Actinobacillus</taxon>
    </lineage>
</organism>
<accession>A6VP67</accession>
<name>MUKF_ACTSZ</name>
<sequence>MSETSQTIPELVSWAREREFSLSLNTERLSYLLAIALYNNERFDGEMQESDLVDIFRHVSKEFDQSDNITTRANNAINDLVKQRFINRFSSEFTDGLSIYRLTPLGVGVSDYYIRQREFSALRLSVQLAIVADEIQRASESAEEAVRRGEDEYYWRRNVFAPLKYSVAEIFDSIDLSQRIMDENQQSIKEEIAELLTKDWQAAIASCERLLDETSGNLRELQDTLNAAGDKLQAQLLRIQDCVMGRNELYFIDQLIVDLQSKLDRIISWGQQAIDLWIGYDRHVHKFIRTAIDMDKNRVFSQRLRQSIHHYFDAPWFLWTAQAERLVDLRDEELTLRDEDALGELPEALEYEQLSDLHDQIVEAMQALLINHREHNQPIDLSLVLKQQLDNYPLSRHFDVARVIVDQAVRLGMASADLSGVYSQWHEINDYGAEVQANVIDEYK</sequence>
<proteinExistence type="inferred from homology"/>